<reference key="1">
    <citation type="submission" date="2005-08" db="EMBL/GenBank/DDBJ databases">
        <title>Complete sequence of Pelodictyon luteolum DSM 273.</title>
        <authorList>
            <consortium name="US DOE Joint Genome Institute"/>
            <person name="Copeland A."/>
            <person name="Lucas S."/>
            <person name="Lapidus A."/>
            <person name="Barry K."/>
            <person name="Detter J.C."/>
            <person name="Glavina T."/>
            <person name="Hammon N."/>
            <person name="Israni S."/>
            <person name="Pitluck S."/>
            <person name="Bryant D."/>
            <person name="Schmutz J."/>
            <person name="Larimer F."/>
            <person name="Land M."/>
            <person name="Kyrpides N."/>
            <person name="Ivanova N."/>
            <person name="Richardson P."/>
        </authorList>
    </citation>
    <scope>NUCLEOTIDE SEQUENCE [LARGE SCALE GENOMIC DNA]</scope>
    <source>
        <strain>DSM 273 / BCRC 81028 / 2530</strain>
    </source>
</reference>
<comment type="function">
    <text evidence="1">Presumably involved in the processing and regular turnover of intracellular proteins. Catalyzes the removal of unsubstituted N-terminal amino acids from various peptides.</text>
</comment>
<comment type="catalytic activity">
    <reaction evidence="1">
        <text>Release of an N-terminal amino acid, Xaa-|-Yaa-, in which Xaa is preferably Leu, but may be other amino acids including Pro although not Arg or Lys, and Yaa may be Pro. Amino acid amides and methyl esters are also readily hydrolyzed, but rates on arylamides are exceedingly low.</text>
        <dbReference type="EC" id="3.4.11.1"/>
    </reaction>
</comment>
<comment type="catalytic activity">
    <reaction evidence="1">
        <text>Release of an N-terminal amino acid, preferentially leucine, but not glutamic or aspartic acids.</text>
        <dbReference type="EC" id="3.4.11.10"/>
    </reaction>
</comment>
<comment type="cofactor">
    <cofactor evidence="1">
        <name>Mn(2+)</name>
        <dbReference type="ChEBI" id="CHEBI:29035"/>
    </cofactor>
    <text evidence="1">Binds 2 manganese ions per subunit.</text>
</comment>
<comment type="subcellular location">
    <subcellularLocation>
        <location evidence="1">Cytoplasm</location>
    </subcellularLocation>
</comment>
<comment type="similarity">
    <text evidence="1">Belongs to the peptidase M17 family.</text>
</comment>
<name>AMPA_CHLL3</name>
<dbReference type="EC" id="3.4.11.1" evidence="1"/>
<dbReference type="EC" id="3.4.11.10" evidence="1"/>
<dbReference type="EMBL" id="CP000096">
    <property type="protein sequence ID" value="ABB23816.1"/>
    <property type="molecule type" value="Genomic_DNA"/>
</dbReference>
<dbReference type="RefSeq" id="WP_011357690.1">
    <property type="nucleotide sequence ID" value="NC_007512.1"/>
</dbReference>
<dbReference type="SMR" id="Q3B4B5"/>
<dbReference type="STRING" id="319225.Plut_0954"/>
<dbReference type="KEGG" id="plt:Plut_0954"/>
<dbReference type="eggNOG" id="COG0260">
    <property type="taxonomic scope" value="Bacteria"/>
</dbReference>
<dbReference type="HOGENOM" id="CLU_013734_2_2_10"/>
<dbReference type="OrthoDB" id="9809354at2"/>
<dbReference type="Proteomes" id="UP000002709">
    <property type="component" value="Chromosome"/>
</dbReference>
<dbReference type="GO" id="GO:0005737">
    <property type="term" value="C:cytoplasm"/>
    <property type="evidence" value="ECO:0007669"/>
    <property type="project" value="UniProtKB-SubCell"/>
</dbReference>
<dbReference type="GO" id="GO:0030145">
    <property type="term" value="F:manganese ion binding"/>
    <property type="evidence" value="ECO:0007669"/>
    <property type="project" value="UniProtKB-UniRule"/>
</dbReference>
<dbReference type="GO" id="GO:0070006">
    <property type="term" value="F:metalloaminopeptidase activity"/>
    <property type="evidence" value="ECO:0007669"/>
    <property type="project" value="InterPro"/>
</dbReference>
<dbReference type="GO" id="GO:0006508">
    <property type="term" value="P:proteolysis"/>
    <property type="evidence" value="ECO:0007669"/>
    <property type="project" value="UniProtKB-KW"/>
</dbReference>
<dbReference type="CDD" id="cd00433">
    <property type="entry name" value="Peptidase_M17"/>
    <property type="match status" value="1"/>
</dbReference>
<dbReference type="Gene3D" id="3.40.220.10">
    <property type="entry name" value="Leucine Aminopeptidase, subunit E, domain 1"/>
    <property type="match status" value="1"/>
</dbReference>
<dbReference type="Gene3D" id="3.40.630.10">
    <property type="entry name" value="Zn peptidases"/>
    <property type="match status" value="1"/>
</dbReference>
<dbReference type="HAMAP" id="MF_00181">
    <property type="entry name" value="Cytosol_peptidase_M17"/>
    <property type="match status" value="1"/>
</dbReference>
<dbReference type="InterPro" id="IPR011356">
    <property type="entry name" value="Leucine_aapep/pepB"/>
</dbReference>
<dbReference type="InterPro" id="IPR043472">
    <property type="entry name" value="Macro_dom-like"/>
</dbReference>
<dbReference type="InterPro" id="IPR000819">
    <property type="entry name" value="Peptidase_M17_C"/>
</dbReference>
<dbReference type="InterPro" id="IPR023042">
    <property type="entry name" value="Peptidase_M17_leu_NH2_pept"/>
</dbReference>
<dbReference type="InterPro" id="IPR008283">
    <property type="entry name" value="Peptidase_M17_N"/>
</dbReference>
<dbReference type="NCBIfam" id="NF002073">
    <property type="entry name" value="PRK00913.1-2"/>
    <property type="match status" value="1"/>
</dbReference>
<dbReference type="NCBIfam" id="NF002074">
    <property type="entry name" value="PRK00913.1-4"/>
    <property type="match status" value="1"/>
</dbReference>
<dbReference type="NCBIfam" id="NF002082">
    <property type="entry name" value="PRK00913.3-4"/>
    <property type="match status" value="1"/>
</dbReference>
<dbReference type="PANTHER" id="PTHR11963:SF23">
    <property type="entry name" value="CYTOSOL AMINOPEPTIDASE"/>
    <property type="match status" value="1"/>
</dbReference>
<dbReference type="PANTHER" id="PTHR11963">
    <property type="entry name" value="LEUCINE AMINOPEPTIDASE-RELATED"/>
    <property type="match status" value="1"/>
</dbReference>
<dbReference type="Pfam" id="PF00883">
    <property type="entry name" value="Peptidase_M17"/>
    <property type="match status" value="1"/>
</dbReference>
<dbReference type="Pfam" id="PF02789">
    <property type="entry name" value="Peptidase_M17_N"/>
    <property type="match status" value="1"/>
</dbReference>
<dbReference type="PRINTS" id="PR00481">
    <property type="entry name" value="LAMNOPPTDASE"/>
</dbReference>
<dbReference type="SUPFAM" id="SSF52949">
    <property type="entry name" value="Macro domain-like"/>
    <property type="match status" value="1"/>
</dbReference>
<dbReference type="SUPFAM" id="SSF53187">
    <property type="entry name" value="Zn-dependent exopeptidases"/>
    <property type="match status" value="1"/>
</dbReference>
<dbReference type="PROSITE" id="PS00631">
    <property type="entry name" value="CYTOSOL_AP"/>
    <property type="match status" value="1"/>
</dbReference>
<feature type="chain" id="PRO_1000019949" description="Probable cytosol aminopeptidase">
    <location>
        <begin position="1"/>
        <end position="508"/>
    </location>
</feature>
<feature type="active site" evidence="1">
    <location>
        <position position="288"/>
    </location>
</feature>
<feature type="active site" evidence="1">
    <location>
        <position position="362"/>
    </location>
</feature>
<feature type="binding site" evidence="1">
    <location>
        <position position="276"/>
    </location>
    <ligand>
        <name>Mn(2+)</name>
        <dbReference type="ChEBI" id="CHEBI:29035"/>
        <label>2</label>
    </ligand>
</feature>
<feature type="binding site" evidence="1">
    <location>
        <position position="281"/>
    </location>
    <ligand>
        <name>Mn(2+)</name>
        <dbReference type="ChEBI" id="CHEBI:29035"/>
        <label>1</label>
    </ligand>
</feature>
<feature type="binding site" evidence="1">
    <location>
        <position position="281"/>
    </location>
    <ligand>
        <name>Mn(2+)</name>
        <dbReference type="ChEBI" id="CHEBI:29035"/>
        <label>2</label>
    </ligand>
</feature>
<feature type="binding site" evidence="1">
    <location>
        <position position="299"/>
    </location>
    <ligand>
        <name>Mn(2+)</name>
        <dbReference type="ChEBI" id="CHEBI:29035"/>
        <label>2</label>
    </ligand>
</feature>
<feature type="binding site" evidence="1">
    <location>
        <position position="358"/>
    </location>
    <ligand>
        <name>Mn(2+)</name>
        <dbReference type="ChEBI" id="CHEBI:29035"/>
        <label>1</label>
    </ligand>
</feature>
<feature type="binding site" evidence="1">
    <location>
        <position position="360"/>
    </location>
    <ligand>
        <name>Mn(2+)</name>
        <dbReference type="ChEBI" id="CHEBI:29035"/>
        <label>1</label>
    </ligand>
</feature>
<feature type="binding site" evidence="1">
    <location>
        <position position="360"/>
    </location>
    <ligand>
        <name>Mn(2+)</name>
        <dbReference type="ChEBI" id="CHEBI:29035"/>
        <label>2</label>
    </ligand>
</feature>
<proteinExistence type="inferred from homology"/>
<protein>
    <recommendedName>
        <fullName evidence="1">Probable cytosol aminopeptidase</fullName>
        <ecNumber evidence="1">3.4.11.1</ecNumber>
    </recommendedName>
    <alternativeName>
        <fullName evidence="1">Leucine aminopeptidase</fullName>
        <shortName evidence="1">LAP</shortName>
        <ecNumber evidence="1">3.4.11.10</ecNumber>
    </alternativeName>
    <alternativeName>
        <fullName evidence="1">Leucyl aminopeptidase</fullName>
    </alternativeName>
</protein>
<gene>
    <name evidence="1" type="primary">pepA</name>
    <name type="ordered locus">Plut_0954</name>
</gene>
<sequence length="508" mass="52743">MKTAATFSALQDLDADLLIFPFSSEGLKKAASPVLEAAGLSDAPLDDFKAAAGDTLVLYPRPGKLRAPRVMLVGTGEAGSLDDWHRAATAAASRAVDLEARRIVFDLPAAGGKAKPGIEAVAETLVEGCLFGAYRFERLKSGKLDKGEKKTAAKGKAKKAEKGIDLLTLRVPASALAAAEKGMASGLVIGSAQEMARNLVNLPGNHLQAEDIARAAAASGKQYGYGVTVLRKKEIESLRMGGLVAVNQGSLNPPTFTVMDYVPKKKAKATIALVGKGVTFDSGGISIKPSEGMGDMKSDMAGAAAVIGAVEAAARLALPVRIIGLIPATDNMPDGNAQKPGDVITTYSGITVEVGNTDAEGRLILADALTYAAQKYSPDAIIDLATLTGACIVALGYQVAGLFSNDDALAGAIEGAARDTGEKVWRLPLWELYDEQIKSDVADVSNTGSRGAGTITAAKFLEKFIDGHKKWAHIDIAGPSFPAKGAAKVNGGSGFGVRLLVELLRKWS</sequence>
<keyword id="KW-0031">Aminopeptidase</keyword>
<keyword id="KW-0963">Cytoplasm</keyword>
<keyword id="KW-0378">Hydrolase</keyword>
<keyword id="KW-0464">Manganese</keyword>
<keyword id="KW-0479">Metal-binding</keyword>
<keyword id="KW-0645">Protease</keyword>
<keyword id="KW-1185">Reference proteome</keyword>
<evidence type="ECO:0000255" key="1">
    <source>
        <dbReference type="HAMAP-Rule" id="MF_00181"/>
    </source>
</evidence>
<accession>Q3B4B5</accession>
<organism>
    <name type="scientific">Chlorobium luteolum (strain DSM 273 / BCRC 81028 / 2530)</name>
    <name type="common">Pelodictyon luteolum</name>
    <dbReference type="NCBI Taxonomy" id="319225"/>
    <lineage>
        <taxon>Bacteria</taxon>
        <taxon>Pseudomonadati</taxon>
        <taxon>Chlorobiota</taxon>
        <taxon>Chlorobiia</taxon>
        <taxon>Chlorobiales</taxon>
        <taxon>Chlorobiaceae</taxon>
        <taxon>Chlorobium/Pelodictyon group</taxon>
        <taxon>Pelodictyon</taxon>
    </lineage>
</organism>